<evidence type="ECO:0000255" key="1">
    <source>
        <dbReference type="HAMAP-Rule" id="MF_00137"/>
    </source>
</evidence>
<comment type="catalytic activity">
    <reaction evidence="1">
        <text>5-amino-1-(5-phospho-D-ribosyl)imidazole-4-carboxylate + L-aspartate + ATP = (2S)-2-[5-amino-1-(5-phospho-beta-D-ribosyl)imidazole-4-carboxamido]succinate + ADP + phosphate + 2 H(+)</text>
        <dbReference type="Rhea" id="RHEA:22628"/>
        <dbReference type="ChEBI" id="CHEBI:15378"/>
        <dbReference type="ChEBI" id="CHEBI:29991"/>
        <dbReference type="ChEBI" id="CHEBI:30616"/>
        <dbReference type="ChEBI" id="CHEBI:43474"/>
        <dbReference type="ChEBI" id="CHEBI:58443"/>
        <dbReference type="ChEBI" id="CHEBI:77657"/>
        <dbReference type="ChEBI" id="CHEBI:456216"/>
        <dbReference type="EC" id="6.3.2.6"/>
    </reaction>
</comment>
<comment type="pathway">
    <text evidence="1">Purine metabolism; IMP biosynthesis via de novo pathway; 5-amino-1-(5-phospho-D-ribosyl)imidazole-4-carboxamide from 5-amino-1-(5-phospho-D-ribosyl)imidazole-4-carboxylate: step 1/2.</text>
</comment>
<comment type="similarity">
    <text evidence="1">Belongs to the SAICAR synthetase family.</text>
</comment>
<proteinExistence type="inferred from homology"/>
<name>PUR7_CLOAB</name>
<keyword id="KW-0067">ATP-binding</keyword>
<keyword id="KW-0436">Ligase</keyword>
<keyword id="KW-0547">Nucleotide-binding</keyword>
<keyword id="KW-0658">Purine biosynthesis</keyword>
<keyword id="KW-1185">Reference proteome</keyword>
<protein>
    <recommendedName>
        <fullName evidence="1">Phosphoribosylaminoimidazole-succinocarboxamide synthase</fullName>
        <ecNumber evidence="1">6.3.2.6</ecNumber>
    </recommendedName>
    <alternativeName>
        <fullName evidence="1">SAICAR synthetase</fullName>
    </alternativeName>
</protein>
<dbReference type="EC" id="6.3.2.6" evidence="1"/>
<dbReference type="EMBL" id="AE001437">
    <property type="protein sequence ID" value="AAK79359.1"/>
    <property type="molecule type" value="Genomic_DNA"/>
</dbReference>
<dbReference type="PIR" id="D97071">
    <property type="entry name" value="D97071"/>
</dbReference>
<dbReference type="RefSeq" id="NP_348019.1">
    <property type="nucleotide sequence ID" value="NC_003030.1"/>
</dbReference>
<dbReference type="RefSeq" id="WP_010964700.1">
    <property type="nucleotide sequence ID" value="NC_003030.1"/>
</dbReference>
<dbReference type="SMR" id="Q97J95"/>
<dbReference type="STRING" id="272562.CA_C1391"/>
<dbReference type="GeneID" id="44997897"/>
<dbReference type="KEGG" id="cac:CA_C1391"/>
<dbReference type="PATRIC" id="fig|272562.8.peg.1597"/>
<dbReference type="eggNOG" id="COG0152">
    <property type="taxonomic scope" value="Bacteria"/>
</dbReference>
<dbReference type="HOGENOM" id="CLU_061495_2_0_9"/>
<dbReference type="OrthoDB" id="9801549at2"/>
<dbReference type="UniPathway" id="UPA00074">
    <property type="reaction ID" value="UER00131"/>
</dbReference>
<dbReference type="Proteomes" id="UP000000814">
    <property type="component" value="Chromosome"/>
</dbReference>
<dbReference type="GO" id="GO:0005524">
    <property type="term" value="F:ATP binding"/>
    <property type="evidence" value="ECO:0007669"/>
    <property type="project" value="UniProtKB-KW"/>
</dbReference>
<dbReference type="GO" id="GO:0004639">
    <property type="term" value="F:phosphoribosylaminoimidazolesuccinocarboxamide synthase activity"/>
    <property type="evidence" value="ECO:0007669"/>
    <property type="project" value="UniProtKB-UniRule"/>
</dbReference>
<dbReference type="GO" id="GO:0006189">
    <property type="term" value="P:'de novo' IMP biosynthetic process"/>
    <property type="evidence" value="ECO:0007669"/>
    <property type="project" value="UniProtKB-UniRule"/>
</dbReference>
<dbReference type="GO" id="GO:0009236">
    <property type="term" value="P:cobalamin biosynthetic process"/>
    <property type="evidence" value="ECO:0007669"/>
    <property type="project" value="InterPro"/>
</dbReference>
<dbReference type="CDD" id="cd01415">
    <property type="entry name" value="SAICAR_synt_PurC"/>
    <property type="match status" value="1"/>
</dbReference>
<dbReference type="FunFam" id="3.30.200.20:FF:000189">
    <property type="entry name" value="Phosphoribosylaminoimidazole-succinocarboxamide synthase"/>
    <property type="match status" value="1"/>
</dbReference>
<dbReference type="FunFam" id="3.30.470.20:FF:000006">
    <property type="entry name" value="Phosphoribosylaminoimidazole-succinocarboxamide synthase"/>
    <property type="match status" value="1"/>
</dbReference>
<dbReference type="Gene3D" id="3.30.470.20">
    <property type="entry name" value="ATP-grasp fold, B domain"/>
    <property type="match status" value="1"/>
</dbReference>
<dbReference type="Gene3D" id="3.30.200.20">
    <property type="entry name" value="Phosphorylase Kinase, domain 1"/>
    <property type="match status" value="1"/>
</dbReference>
<dbReference type="HAMAP" id="MF_00137">
    <property type="entry name" value="SAICAR_synth"/>
    <property type="match status" value="1"/>
</dbReference>
<dbReference type="InterPro" id="IPR028923">
    <property type="entry name" value="SAICAR_synt/ADE2_N"/>
</dbReference>
<dbReference type="InterPro" id="IPR033934">
    <property type="entry name" value="SAICAR_synt_PurC"/>
</dbReference>
<dbReference type="InterPro" id="IPR001636">
    <property type="entry name" value="SAICAR_synth"/>
</dbReference>
<dbReference type="InterPro" id="IPR050089">
    <property type="entry name" value="SAICAR_synthetase"/>
</dbReference>
<dbReference type="InterPro" id="IPR018236">
    <property type="entry name" value="SAICAR_synthetase_CS"/>
</dbReference>
<dbReference type="NCBIfam" id="TIGR00081">
    <property type="entry name" value="purC"/>
    <property type="match status" value="1"/>
</dbReference>
<dbReference type="PANTHER" id="PTHR43599">
    <property type="entry name" value="MULTIFUNCTIONAL PROTEIN ADE2"/>
    <property type="match status" value="1"/>
</dbReference>
<dbReference type="PANTHER" id="PTHR43599:SF3">
    <property type="entry name" value="SI:DKEY-6E2.2"/>
    <property type="match status" value="1"/>
</dbReference>
<dbReference type="Pfam" id="PF01259">
    <property type="entry name" value="SAICAR_synt"/>
    <property type="match status" value="1"/>
</dbReference>
<dbReference type="SUPFAM" id="SSF56104">
    <property type="entry name" value="SAICAR synthase-like"/>
    <property type="match status" value="1"/>
</dbReference>
<dbReference type="PROSITE" id="PS01057">
    <property type="entry name" value="SAICAR_SYNTHETASE_1"/>
    <property type="match status" value="1"/>
</dbReference>
<dbReference type="PROSITE" id="PS01058">
    <property type="entry name" value="SAICAR_SYNTHETASE_2"/>
    <property type="match status" value="1"/>
</dbReference>
<gene>
    <name evidence="1" type="primary">purC</name>
    <name type="ordered locus">CA_C1391</name>
</gene>
<feature type="chain" id="PRO_0000100817" description="Phosphoribosylaminoimidazole-succinocarboxamide synthase">
    <location>
        <begin position="1"/>
        <end position="235"/>
    </location>
</feature>
<accession>Q97J95</accession>
<organism>
    <name type="scientific">Clostridium acetobutylicum (strain ATCC 824 / DSM 792 / JCM 1419 / IAM 19013 / LMG 5710 / NBRC 13948 / NRRL B-527 / VKM B-1787 / 2291 / W)</name>
    <dbReference type="NCBI Taxonomy" id="272562"/>
    <lineage>
        <taxon>Bacteria</taxon>
        <taxon>Bacillati</taxon>
        <taxon>Bacillota</taxon>
        <taxon>Clostridia</taxon>
        <taxon>Eubacteriales</taxon>
        <taxon>Clostridiaceae</taxon>
        <taxon>Clostridium</taxon>
    </lineage>
</organism>
<sequence>MEKKEMMYEGKAKKVYSTEDPEKVVIYYKDDATAFNGEKKGQIEDKGVLNNNITSMLFELLEKHGVKTHFEKKLSDREQLCKKVEIVPLEVIVRNVAAGSMAKRLGLEEGYELKTTVFELSYKDDALGDPLINDTHAVAIGATTFEELDKIYAATKTVNDVLKEFFHKQGIKLIDFKIEFGRYNGEVLLADEISPDTCRLWDEKTNEKLDKDRFRRDMGNVKEAYVEILNRITGK</sequence>
<reference key="1">
    <citation type="journal article" date="2001" name="J. Bacteriol.">
        <title>Genome sequence and comparative analysis of the solvent-producing bacterium Clostridium acetobutylicum.</title>
        <authorList>
            <person name="Noelling J."/>
            <person name="Breton G."/>
            <person name="Omelchenko M.V."/>
            <person name="Makarova K.S."/>
            <person name="Zeng Q."/>
            <person name="Gibson R."/>
            <person name="Lee H.M."/>
            <person name="Dubois J."/>
            <person name="Qiu D."/>
            <person name="Hitti J."/>
            <person name="Wolf Y.I."/>
            <person name="Tatusov R.L."/>
            <person name="Sabathe F."/>
            <person name="Doucette-Stamm L.A."/>
            <person name="Soucaille P."/>
            <person name="Daly M.J."/>
            <person name="Bennett G.N."/>
            <person name="Koonin E.V."/>
            <person name="Smith D.R."/>
        </authorList>
    </citation>
    <scope>NUCLEOTIDE SEQUENCE [LARGE SCALE GENOMIC DNA]</scope>
    <source>
        <strain>ATCC 824 / DSM 792 / JCM 1419 / IAM 19013 / LMG 5710 / NBRC 13948 / NRRL B-527 / VKM B-1787 / 2291 / W</strain>
    </source>
</reference>